<comment type="function">
    <text evidence="1">Catalyzes the conversion of 3-deoxy-D-arabino-heptulosonate 7-phosphate (DAHP) to dehydroquinate (DHQ).</text>
</comment>
<comment type="catalytic activity">
    <reaction evidence="1">
        <text>7-phospho-2-dehydro-3-deoxy-D-arabino-heptonate = 3-dehydroquinate + phosphate</text>
        <dbReference type="Rhea" id="RHEA:21968"/>
        <dbReference type="ChEBI" id="CHEBI:32364"/>
        <dbReference type="ChEBI" id="CHEBI:43474"/>
        <dbReference type="ChEBI" id="CHEBI:58394"/>
        <dbReference type="EC" id="4.2.3.4"/>
    </reaction>
</comment>
<comment type="cofactor">
    <cofactor evidence="1">
        <name>Co(2+)</name>
        <dbReference type="ChEBI" id="CHEBI:48828"/>
    </cofactor>
    <cofactor evidence="1">
        <name>Zn(2+)</name>
        <dbReference type="ChEBI" id="CHEBI:29105"/>
    </cofactor>
    <text evidence="1">Binds 1 divalent metal cation per subunit. Can use either Co(2+) or Zn(2+).</text>
</comment>
<comment type="cofactor">
    <cofactor evidence="1">
        <name>NAD(+)</name>
        <dbReference type="ChEBI" id="CHEBI:57540"/>
    </cofactor>
</comment>
<comment type="pathway">
    <text evidence="1">Metabolic intermediate biosynthesis; chorismate biosynthesis; chorismate from D-erythrose 4-phosphate and phosphoenolpyruvate: step 2/7.</text>
</comment>
<comment type="subcellular location">
    <subcellularLocation>
        <location evidence="1">Cytoplasm</location>
    </subcellularLocation>
</comment>
<comment type="similarity">
    <text evidence="1">Belongs to the sugar phosphate cyclases superfamily. Dehydroquinate synthase family.</text>
</comment>
<protein>
    <recommendedName>
        <fullName evidence="1">3-dehydroquinate synthase</fullName>
        <shortName evidence="1">DHQS</shortName>
        <ecNumber evidence="1">4.2.3.4</ecNumber>
    </recommendedName>
</protein>
<accession>A2S718</accession>
<organism>
    <name type="scientific">Burkholderia mallei (strain NCTC 10229)</name>
    <dbReference type="NCBI Taxonomy" id="412022"/>
    <lineage>
        <taxon>Bacteria</taxon>
        <taxon>Pseudomonadati</taxon>
        <taxon>Pseudomonadota</taxon>
        <taxon>Betaproteobacteria</taxon>
        <taxon>Burkholderiales</taxon>
        <taxon>Burkholderiaceae</taxon>
        <taxon>Burkholderia</taxon>
        <taxon>pseudomallei group</taxon>
    </lineage>
</organism>
<name>AROB_BURM9</name>
<gene>
    <name evidence="1" type="primary">aroB</name>
    <name type="ordered locus">BMA10229_A1758</name>
</gene>
<reference key="1">
    <citation type="journal article" date="2010" name="Genome Biol. Evol.">
        <title>Continuing evolution of Burkholderia mallei through genome reduction and large-scale rearrangements.</title>
        <authorList>
            <person name="Losada L."/>
            <person name="Ronning C.M."/>
            <person name="DeShazer D."/>
            <person name="Woods D."/>
            <person name="Fedorova N."/>
            <person name="Kim H.S."/>
            <person name="Shabalina S.A."/>
            <person name="Pearson T.R."/>
            <person name="Brinkac L."/>
            <person name="Tan P."/>
            <person name="Nandi T."/>
            <person name="Crabtree J."/>
            <person name="Badger J."/>
            <person name="Beckstrom-Sternberg S."/>
            <person name="Saqib M."/>
            <person name="Schutzer S.E."/>
            <person name="Keim P."/>
            <person name="Nierman W.C."/>
        </authorList>
    </citation>
    <scope>NUCLEOTIDE SEQUENCE [LARGE SCALE GENOMIC DNA]</scope>
    <source>
        <strain>NCTC 10229</strain>
    </source>
</reference>
<evidence type="ECO:0000255" key="1">
    <source>
        <dbReference type="HAMAP-Rule" id="MF_00110"/>
    </source>
</evidence>
<proteinExistence type="inferred from homology"/>
<sequence length="359" mass="37896">MITVNVDLGERAYPIHIGADLIGRTELFAPHIAGASVTIVTNTTVEPLYGDTLRAALAPLGKRVSTVVLPDGEAYKNWETLNLIFDGLLEQHADRKTTLIALGGGVIGDMTGFAAACYMRGVPFIQVPTTLLSQVDSSVGGKTGINHPLGKNMIGAFYQPQAVIADIGALSTLPDRELAAGVAEIVKTGAIADAAFFDWIEANVGALTRRDPDALAHAVKRSCEIKAGVVAADEREGGLRAILNFGHTFGHAIEAGLGYGEWLHGEAVGCGMVMAADLSVRTGHLDEASRARLCRVVEAAHLPTRAPDLGDARYVELMRVDKKAEAGAIKFILLKRFGETIITPAPDDAVLATLAATTR</sequence>
<dbReference type="EC" id="4.2.3.4" evidence="1"/>
<dbReference type="EMBL" id="CP000546">
    <property type="protein sequence ID" value="ABN01360.1"/>
    <property type="molecule type" value="Genomic_DNA"/>
</dbReference>
<dbReference type="RefSeq" id="WP_004196751.1">
    <property type="nucleotide sequence ID" value="NC_008836.1"/>
</dbReference>
<dbReference type="SMR" id="A2S718"/>
<dbReference type="GeneID" id="92980425"/>
<dbReference type="KEGG" id="bml:BMA10229_A1758"/>
<dbReference type="HOGENOM" id="CLU_001201_0_2_4"/>
<dbReference type="UniPathway" id="UPA00053">
    <property type="reaction ID" value="UER00085"/>
</dbReference>
<dbReference type="Proteomes" id="UP000002283">
    <property type="component" value="Chromosome I"/>
</dbReference>
<dbReference type="GO" id="GO:0005737">
    <property type="term" value="C:cytoplasm"/>
    <property type="evidence" value="ECO:0007669"/>
    <property type="project" value="UniProtKB-SubCell"/>
</dbReference>
<dbReference type="GO" id="GO:0003856">
    <property type="term" value="F:3-dehydroquinate synthase activity"/>
    <property type="evidence" value="ECO:0007669"/>
    <property type="project" value="UniProtKB-UniRule"/>
</dbReference>
<dbReference type="GO" id="GO:0046872">
    <property type="term" value="F:metal ion binding"/>
    <property type="evidence" value="ECO:0007669"/>
    <property type="project" value="UniProtKB-KW"/>
</dbReference>
<dbReference type="GO" id="GO:0000166">
    <property type="term" value="F:nucleotide binding"/>
    <property type="evidence" value="ECO:0007669"/>
    <property type="project" value="UniProtKB-KW"/>
</dbReference>
<dbReference type="GO" id="GO:0008652">
    <property type="term" value="P:amino acid biosynthetic process"/>
    <property type="evidence" value="ECO:0007669"/>
    <property type="project" value="UniProtKB-KW"/>
</dbReference>
<dbReference type="GO" id="GO:0009073">
    <property type="term" value="P:aromatic amino acid family biosynthetic process"/>
    <property type="evidence" value="ECO:0007669"/>
    <property type="project" value="UniProtKB-KW"/>
</dbReference>
<dbReference type="GO" id="GO:0009423">
    <property type="term" value="P:chorismate biosynthetic process"/>
    <property type="evidence" value="ECO:0007669"/>
    <property type="project" value="UniProtKB-UniRule"/>
</dbReference>
<dbReference type="CDD" id="cd08195">
    <property type="entry name" value="DHQS"/>
    <property type="match status" value="1"/>
</dbReference>
<dbReference type="FunFam" id="3.40.50.1970:FF:000001">
    <property type="entry name" value="3-dehydroquinate synthase"/>
    <property type="match status" value="1"/>
</dbReference>
<dbReference type="Gene3D" id="3.40.50.1970">
    <property type="match status" value="1"/>
</dbReference>
<dbReference type="Gene3D" id="1.20.1090.10">
    <property type="entry name" value="Dehydroquinate synthase-like - alpha domain"/>
    <property type="match status" value="1"/>
</dbReference>
<dbReference type="HAMAP" id="MF_00110">
    <property type="entry name" value="DHQ_synthase"/>
    <property type="match status" value="1"/>
</dbReference>
<dbReference type="InterPro" id="IPR050071">
    <property type="entry name" value="Dehydroquinate_synthase"/>
</dbReference>
<dbReference type="InterPro" id="IPR016037">
    <property type="entry name" value="DHQ_synth_AroB"/>
</dbReference>
<dbReference type="InterPro" id="IPR030963">
    <property type="entry name" value="DHQ_synth_fam"/>
</dbReference>
<dbReference type="InterPro" id="IPR030960">
    <property type="entry name" value="DHQS/DOIS_N"/>
</dbReference>
<dbReference type="InterPro" id="IPR056179">
    <property type="entry name" value="DHQS_C"/>
</dbReference>
<dbReference type="NCBIfam" id="TIGR01357">
    <property type="entry name" value="aroB"/>
    <property type="match status" value="1"/>
</dbReference>
<dbReference type="PANTHER" id="PTHR43622">
    <property type="entry name" value="3-DEHYDROQUINATE SYNTHASE"/>
    <property type="match status" value="1"/>
</dbReference>
<dbReference type="PANTHER" id="PTHR43622:SF7">
    <property type="entry name" value="3-DEHYDROQUINATE SYNTHASE, CHLOROPLASTIC"/>
    <property type="match status" value="1"/>
</dbReference>
<dbReference type="Pfam" id="PF01761">
    <property type="entry name" value="DHQ_synthase"/>
    <property type="match status" value="1"/>
</dbReference>
<dbReference type="Pfam" id="PF24621">
    <property type="entry name" value="DHQS_C"/>
    <property type="match status" value="1"/>
</dbReference>
<dbReference type="PIRSF" id="PIRSF001455">
    <property type="entry name" value="DHQ_synth"/>
    <property type="match status" value="1"/>
</dbReference>
<dbReference type="SUPFAM" id="SSF56796">
    <property type="entry name" value="Dehydroquinate synthase-like"/>
    <property type="match status" value="1"/>
</dbReference>
<feature type="chain" id="PRO_1000094476" description="3-dehydroquinate synthase">
    <location>
        <begin position="1"/>
        <end position="359"/>
    </location>
</feature>
<feature type="binding site" evidence="1">
    <location>
        <begin position="71"/>
        <end position="76"/>
    </location>
    <ligand>
        <name>NAD(+)</name>
        <dbReference type="ChEBI" id="CHEBI:57540"/>
    </ligand>
</feature>
<feature type="binding site" evidence="1">
    <location>
        <begin position="105"/>
        <end position="109"/>
    </location>
    <ligand>
        <name>NAD(+)</name>
        <dbReference type="ChEBI" id="CHEBI:57540"/>
    </ligand>
</feature>
<feature type="binding site" evidence="1">
    <location>
        <begin position="129"/>
        <end position="130"/>
    </location>
    <ligand>
        <name>NAD(+)</name>
        <dbReference type="ChEBI" id="CHEBI:57540"/>
    </ligand>
</feature>
<feature type="binding site" evidence="1">
    <location>
        <position position="142"/>
    </location>
    <ligand>
        <name>NAD(+)</name>
        <dbReference type="ChEBI" id="CHEBI:57540"/>
    </ligand>
</feature>
<feature type="binding site" evidence="1">
    <location>
        <position position="151"/>
    </location>
    <ligand>
        <name>NAD(+)</name>
        <dbReference type="ChEBI" id="CHEBI:57540"/>
    </ligand>
</feature>
<feature type="binding site" evidence="1">
    <location>
        <position position="184"/>
    </location>
    <ligand>
        <name>Zn(2+)</name>
        <dbReference type="ChEBI" id="CHEBI:29105"/>
    </ligand>
</feature>
<feature type="binding site" evidence="1">
    <location>
        <position position="247"/>
    </location>
    <ligand>
        <name>Zn(2+)</name>
        <dbReference type="ChEBI" id="CHEBI:29105"/>
    </ligand>
</feature>
<feature type="binding site" evidence="1">
    <location>
        <position position="264"/>
    </location>
    <ligand>
        <name>Zn(2+)</name>
        <dbReference type="ChEBI" id="CHEBI:29105"/>
    </ligand>
</feature>
<keyword id="KW-0028">Amino-acid biosynthesis</keyword>
<keyword id="KW-0057">Aromatic amino acid biosynthesis</keyword>
<keyword id="KW-0170">Cobalt</keyword>
<keyword id="KW-0963">Cytoplasm</keyword>
<keyword id="KW-0456">Lyase</keyword>
<keyword id="KW-0479">Metal-binding</keyword>
<keyword id="KW-0520">NAD</keyword>
<keyword id="KW-0547">Nucleotide-binding</keyword>
<keyword id="KW-0862">Zinc</keyword>